<reference key="1">
    <citation type="journal article" date="1997" name="Nature">
        <title>The complete genome sequence of the Gram-positive bacterium Bacillus subtilis.</title>
        <authorList>
            <person name="Kunst F."/>
            <person name="Ogasawara N."/>
            <person name="Moszer I."/>
            <person name="Albertini A.M."/>
            <person name="Alloni G."/>
            <person name="Azevedo V."/>
            <person name="Bertero M.G."/>
            <person name="Bessieres P."/>
            <person name="Bolotin A."/>
            <person name="Borchert S."/>
            <person name="Borriss R."/>
            <person name="Boursier L."/>
            <person name="Brans A."/>
            <person name="Braun M."/>
            <person name="Brignell S.C."/>
            <person name="Bron S."/>
            <person name="Brouillet S."/>
            <person name="Bruschi C.V."/>
            <person name="Caldwell B."/>
            <person name="Capuano V."/>
            <person name="Carter N.M."/>
            <person name="Choi S.-K."/>
            <person name="Codani J.-J."/>
            <person name="Connerton I.F."/>
            <person name="Cummings N.J."/>
            <person name="Daniel R.A."/>
            <person name="Denizot F."/>
            <person name="Devine K.M."/>
            <person name="Duesterhoeft A."/>
            <person name="Ehrlich S.D."/>
            <person name="Emmerson P.T."/>
            <person name="Entian K.-D."/>
            <person name="Errington J."/>
            <person name="Fabret C."/>
            <person name="Ferrari E."/>
            <person name="Foulger D."/>
            <person name="Fritz C."/>
            <person name="Fujita M."/>
            <person name="Fujita Y."/>
            <person name="Fuma S."/>
            <person name="Galizzi A."/>
            <person name="Galleron N."/>
            <person name="Ghim S.-Y."/>
            <person name="Glaser P."/>
            <person name="Goffeau A."/>
            <person name="Golightly E.J."/>
            <person name="Grandi G."/>
            <person name="Guiseppi G."/>
            <person name="Guy B.J."/>
            <person name="Haga K."/>
            <person name="Haiech J."/>
            <person name="Harwood C.R."/>
            <person name="Henaut A."/>
            <person name="Hilbert H."/>
            <person name="Holsappel S."/>
            <person name="Hosono S."/>
            <person name="Hullo M.-F."/>
            <person name="Itaya M."/>
            <person name="Jones L.-M."/>
            <person name="Joris B."/>
            <person name="Karamata D."/>
            <person name="Kasahara Y."/>
            <person name="Klaerr-Blanchard M."/>
            <person name="Klein C."/>
            <person name="Kobayashi Y."/>
            <person name="Koetter P."/>
            <person name="Koningstein G."/>
            <person name="Krogh S."/>
            <person name="Kumano M."/>
            <person name="Kurita K."/>
            <person name="Lapidus A."/>
            <person name="Lardinois S."/>
            <person name="Lauber J."/>
            <person name="Lazarevic V."/>
            <person name="Lee S.-M."/>
            <person name="Levine A."/>
            <person name="Liu H."/>
            <person name="Masuda S."/>
            <person name="Mauel C."/>
            <person name="Medigue C."/>
            <person name="Medina N."/>
            <person name="Mellado R.P."/>
            <person name="Mizuno M."/>
            <person name="Moestl D."/>
            <person name="Nakai S."/>
            <person name="Noback M."/>
            <person name="Noone D."/>
            <person name="O'Reilly M."/>
            <person name="Ogawa K."/>
            <person name="Ogiwara A."/>
            <person name="Oudega B."/>
            <person name="Park S.-H."/>
            <person name="Parro V."/>
            <person name="Pohl T.M."/>
            <person name="Portetelle D."/>
            <person name="Porwollik S."/>
            <person name="Prescott A.M."/>
            <person name="Presecan E."/>
            <person name="Pujic P."/>
            <person name="Purnelle B."/>
            <person name="Rapoport G."/>
            <person name="Rey M."/>
            <person name="Reynolds S."/>
            <person name="Rieger M."/>
            <person name="Rivolta C."/>
            <person name="Rocha E."/>
            <person name="Roche B."/>
            <person name="Rose M."/>
            <person name="Sadaie Y."/>
            <person name="Sato T."/>
            <person name="Scanlan E."/>
            <person name="Schleich S."/>
            <person name="Schroeter R."/>
            <person name="Scoffone F."/>
            <person name="Sekiguchi J."/>
            <person name="Sekowska A."/>
            <person name="Seror S.J."/>
            <person name="Serror P."/>
            <person name="Shin B.-S."/>
            <person name="Soldo B."/>
            <person name="Sorokin A."/>
            <person name="Tacconi E."/>
            <person name="Takagi T."/>
            <person name="Takahashi H."/>
            <person name="Takemaru K."/>
            <person name="Takeuchi M."/>
            <person name="Tamakoshi A."/>
            <person name="Tanaka T."/>
            <person name="Terpstra P."/>
            <person name="Tognoni A."/>
            <person name="Tosato V."/>
            <person name="Uchiyama S."/>
            <person name="Vandenbol M."/>
            <person name="Vannier F."/>
            <person name="Vassarotti A."/>
            <person name="Viari A."/>
            <person name="Wambutt R."/>
            <person name="Wedler E."/>
            <person name="Wedler H."/>
            <person name="Weitzenegger T."/>
            <person name="Winters P."/>
            <person name="Wipat A."/>
            <person name="Yamamoto H."/>
            <person name="Yamane K."/>
            <person name="Yasumoto K."/>
            <person name="Yata K."/>
            <person name="Yoshida K."/>
            <person name="Yoshikawa H.-F."/>
            <person name="Zumstein E."/>
            <person name="Yoshikawa H."/>
            <person name="Danchin A."/>
        </authorList>
    </citation>
    <scope>NUCLEOTIDE SEQUENCE [LARGE SCALE GENOMIC DNA]</scope>
    <source>
        <strain>168</strain>
    </source>
</reference>
<protein>
    <recommendedName>
        <fullName>Uncharacterized protein YozI</fullName>
    </recommendedName>
</protein>
<gene>
    <name type="primary">yozI</name>
    <name type="ordered locus">BSU18870</name>
</gene>
<proteinExistence type="predicted"/>
<keyword id="KW-1185">Reference proteome</keyword>
<feature type="chain" id="PRO_0000359911" description="Uncharacterized protein YozI">
    <location>
        <begin position="1"/>
        <end position="121"/>
    </location>
</feature>
<name>YOZI_BACSU</name>
<dbReference type="EMBL" id="AL009126">
    <property type="protein sequence ID" value="CAB13779.1"/>
    <property type="molecule type" value="Genomic_DNA"/>
</dbReference>
<dbReference type="PIR" id="E69931">
    <property type="entry name" value="E69931"/>
</dbReference>
<dbReference type="RefSeq" id="NP_389768.1">
    <property type="nucleotide sequence ID" value="NC_000964.3"/>
</dbReference>
<dbReference type="RefSeq" id="WP_003231354.1">
    <property type="nucleotide sequence ID" value="NZ_OZ025638.1"/>
</dbReference>
<dbReference type="SMR" id="O31838"/>
<dbReference type="FunCoup" id="O31838">
    <property type="interactions" value="34"/>
</dbReference>
<dbReference type="STRING" id="224308.BSU18870"/>
<dbReference type="PaxDb" id="224308-BSU18870"/>
<dbReference type="EnsemblBacteria" id="CAB13779">
    <property type="protein sequence ID" value="CAB13779"/>
    <property type="gene ID" value="BSU_18870"/>
</dbReference>
<dbReference type="GeneID" id="939961"/>
<dbReference type="KEGG" id="bsu:BSU18870"/>
<dbReference type="PATRIC" id="fig|224308.179.peg.2058"/>
<dbReference type="eggNOG" id="ENOG5032XJY">
    <property type="taxonomic scope" value="Bacteria"/>
</dbReference>
<dbReference type="InParanoid" id="O31838"/>
<dbReference type="OrthoDB" id="1456570at2"/>
<dbReference type="BioCyc" id="BSUB:BSU18870-MONOMER"/>
<dbReference type="Proteomes" id="UP000001570">
    <property type="component" value="Chromosome"/>
</dbReference>
<sequence length="121" mass="13949">MPKLYTCLICGYKGLIQNPLNNDGEYQKTFDICPCCDFEYGYSEDHDVSLGFIVTPDYLIDAAIQLYRKQWIENGMKTANPEDIPEELRNGDCLKFEVLLKQLNSLNLDTENFEIKGFNGY</sequence>
<organism>
    <name type="scientific">Bacillus subtilis (strain 168)</name>
    <dbReference type="NCBI Taxonomy" id="224308"/>
    <lineage>
        <taxon>Bacteria</taxon>
        <taxon>Bacillati</taxon>
        <taxon>Bacillota</taxon>
        <taxon>Bacilli</taxon>
        <taxon>Bacillales</taxon>
        <taxon>Bacillaceae</taxon>
        <taxon>Bacillus</taxon>
    </lineage>
</organism>
<accession>O31838</accession>